<sequence>MYDKNLEKEYYQICEERGYFEIDGNKTIQEKDKNFCIMMPPPNVTGVLHIGHALTFTLQDIMTRYKRMDGYKVLYQPGLDHAGIATQNVVEKQLLTQGIKKEELGREEFIEKVWEWKEQSGGKILDQMRTLGITPAWSRLRFTMDEGLVNAVKKAFVELYDKRLIVRGNYMINWCTHDGALSDIEVEYKENKGKLYHIKYFLKDSDEFLVVATTRPETFFGDTAVMVHPDDERYAKFVDKEVILPISKKAIKIIADKHVEKEFGTGVVKVTPAHDMNDYEVGLRHNLDFISVFDEKGILNEHCLEFQGLERLEAREKIVAKLESLGFIEKIEEYNNQIGYCYRCNNIVEPYISKQWFVKKEIAQESIEKVALGESKFYPNHWINSFNAWMKDLRDWCISRQLWWGHQIPVYYCECSHEWASQHTPKTCPKCQSQNFKQDEDVLDTWFSSGLWAMSTLGWGNENWGKDKIWSEKDLKDFYPNSLLITGFDILFFWVARMMFQSTNVLHQLPFKDIYLHALVKDEQGRKMSKSLGNVIDPNESIKEYSADILRFTLALLAIQGRDIKLSNDKLLQVRNFTNKIYNAKNYLLLNESKFEDLENITLHSELAKYIYAKFQTCVKDVRENLDNYRFNDAANTLYKFFWDDFCDWGIELSKAEKSSVKELGSIFKEALKLLNPFMPFISEYLYHKLSDTELKTSPSIMISKYPKFKEQDKNIEKIFSLLIESIVSIRRAKSLIDLGNSKIEKAYIKFNDKKIKDEIKAYMNFIIMLAKCEQIEFSEEKLPKAICDVSENLEIFITLENVDLSGILTRLENQKNKLEKESFKLNSMLSNEKFIANAPKEVVEQNKEALENLKIQLEKISVELQNLRG</sequence>
<name>SYV_CAMJE</name>
<feature type="chain" id="PRO_0000106219" description="Valine--tRNA ligase">
    <location>
        <begin position="1"/>
        <end position="870"/>
    </location>
</feature>
<feature type="coiled-coil region" evidence="1">
    <location>
        <begin position="800"/>
        <end position="870"/>
    </location>
</feature>
<feature type="short sequence motif" description="'HIGH' region">
    <location>
        <begin position="42"/>
        <end position="52"/>
    </location>
</feature>
<feature type="short sequence motif" description="'KMSKS' region">
    <location>
        <begin position="527"/>
        <end position="531"/>
    </location>
</feature>
<feature type="binding site" evidence="1">
    <location>
        <position position="530"/>
    </location>
    <ligand>
        <name>ATP</name>
        <dbReference type="ChEBI" id="CHEBI:30616"/>
    </ligand>
</feature>
<protein>
    <recommendedName>
        <fullName evidence="1">Valine--tRNA ligase</fullName>
        <ecNumber evidence="1">6.1.1.9</ecNumber>
    </recommendedName>
    <alternativeName>
        <fullName evidence="1">Valyl-tRNA synthetase</fullName>
        <shortName evidence="1">ValRS</shortName>
    </alternativeName>
</protein>
<proteinExistence type="inferred from homology"/>
<accession>Q9PPE4</accession>
<accession>Q0PAB5</accession>
<reference key="1">
    <citation type="journal article" date="2000" name="Nature">
        <title>The genome sequence of the food-borne pathogen Campylobacter jejuni reveals hypervariable sequences.</title>
        <authorList>
            <person name="Parkhill J."/>
            <person name="Wren B.W."/>
            <person name="Mungall K.L."/>
            <person name="Ketley J.M."/>
            <person name="Churcher C.M."/>
            <person name="Basham D."/>
            <person name="Chillingworth T."/>
            <person name="Davies R.M."/>
            <person name="Feltwell T."/>
            <person name="Holroyd S."/>
            <person name="Jagels K."/>
            <person name="Karlyshev A.V."/>
            <person name="Moule S."/>
            <person name="Pallen M.J."/>
            <person name="Penn C.W."/>
            <person name="Quail M.A."/>
            <person name="Rajandream M.A."/>
            <person name="Rutherford K.M."/>
            <person name="van Vliet A.H.M."/>
            <person name="Whitehead S."/>
            <person name="Barrell B.G."/>
        </authorList>
    </citation>
    <scope>NUCLEOTIDE SEQUENCE [LARGE SCALE GENOMIC DNA]</scope>
    <source>
        <strain>ATCC 700819 / NCTC 11168</strain>
    </source>
</reference>
<dbReference type="EC" id="6.1.1.9" evidence="1"/>
<dbReference type="EMBL" id="AL111168">
    <property type="protein sequence ID" value="CAL34903.1"/>
    <property type="molecule type" value="Genomic_DNA"/>
</dbReference>
<dbReference type="PIR" id="G81348">
    <property type="entry name" value="G81348"/>
</dbReference>
<dbReference type="RefSeq" id="WP_002864150.1">
    <property type="nucleotide sequence ID" value="NZ_SZUC01000001.1"/>
</dbReference>
<dbReference type="RefSeq" id="YP_002344182.1">
    <property type="nucleotide sequence ID" value="NC_002163.1"/>
</dbReference>
<dbReference type="SMR" id="Q9PPE4"/>
<dbReference type="STRING" id="192222.Cj0775c"/>
<dbReference type="PaxDb" id="192222-Cj0775c"/>
<dbReference type="EnsemblBacteria" id="CAL34903">
    <property type="protein sequence ID" value="CAL34903"/>
    <property type="gene ID" value="Cj0775c"/>
</dbReference>
<dbReference type="GeneID" id="904417"/>
<dbReference type="KEGG" id="cje:Cj0775c"/>
<dbReference type="PATRIC" id="fig|192222.6.peg.763"/>
<dbReference type="eggNOG" id="COG0525">
    <property type="taxonomic scope" value="Bacteria"/>
</dbReference>
<dbReference type="HOGENOM" id="CLU_001493_0_2_7"/>
<dbReference type="OrthoDB" id="9810365at2"/>
<dbReference type="Proteomes" id="UP000000799">
    <property type="component" value="Chromosome"/>
</dbReference>
<dbReference type="GO" id="GO:0005829">
    <property type="term" value="C:cytosol"/>
    <property type="evidence" value="ECO:0007669"/>
    <property type="project" value="TreeGrafter"/>
</dbReference>
<dbReference type="GO" id="GO:0002161">
    <property type="term" value="F:aminoacyl-tRNA deacylase activity"/>
    <property type="evidence" value="ECO:0007669"/>
    <property type="project" value="InterPro"/>
</dbReference>
<dbReference type="GO" id="GO:0005524">
    <property type="term" value="F:ATP binding"/>
    <property type="evidence" value="ECO:0007669"/>
    <property type="project" value="UniProtKB-UniRule"/>
</dbReference>
<dbReference type="GO" id="GO:0004832">
    <property type="term" value="F:valine-tRNA ligase activity"/>
    <property type="evidence" value="ECO:0007669"/>
    <property type="project" value="UniProtKB-UniRule"/>
</dbReference>
<dbReference type="GO" id="GO:0006438">
    <property type="term" value="P:valyl-tRNA aminoacylation"/>
    <property type="evidence" value="ECO:0007669"/>
    <property type="project" value="UniProtKB-UniRule"/>
</dbReference>
<dbReference type="CDD" id="cd07962">
    <property type="entry name" value="Anticodon_Ia_Val"/>
    <property type="match status" value="1"/>
</dbReference>
<dbReference type="CDD" id="cd00817">
    <property type="entry name" value="ValRS_core"/>
    <property type="match status" value="1"/>
</dbReference>
<dbReference type="FunFam" id="3.40.50.620:FF:000382">
    <property type="entry name" value="Valine--tRNA ligase"/>
    <property type="match status" value="1"/>
</dbReference>
<dbReference type="FunFam" id="3.90.740.10:FF:000005">
    <property type="entry name" value="Valine--tRNA ligase, mitochondrial"/>
    <property type="match status" value="1"/>
</dbReference>
<dbReference type="Gene3D" id="2.170.220.10">
    <property type="match status" value="1"/>
</dbReference>
<dbReference type="Gene3D" id="3.40.50.620">
    <property type="entry name" value="HUPs"/>
    <property type="match status" value="2"/>
</dbReference>
<dbReference type="Gene3D" id="1.10.730.10">
    <property type="entry name" value="Isoleucyl-tRNA Synthetase, Domain 1"/>
    <property type="match status" value="1"/>
</dbReference>
<dbReference type="Gene3D" id="1.10.287.380">
    <property type="entry name" value="Valyl-tRNA synthetase, C-terminal domain"/>
    <property type="match status" value="1"/>
</dbReference>
<dbReference type="Gene3D" id="3.90.740.10">
    <property type="entry name" value="Valyl/Leucyl/Isoleucyl-tRNA synthetase, editing domain"/>
    <property type="match status" value="1"/>
</dbReference>
<dbReference type="HAMAP" id="MF_02004">
    <property type="entry name" value="Val_tRNA_synth_type1"/>
    <property type="match status" value="1"/>
</dbReference>
<dbReference type="InterPro" id="IPR001412">
    <property type="entry name" value="aa-tRNA-synth_I_CS"/>
</dbReference>
<dbReference type="InterPro" id="IPR002300">
    <property type="entry name" value="aa-tRNA-synth_Ia"/>
</dbReference>
<dbReference type="InterPro" id="IPR033705">
    <property type="entry name" value="Anticodon_Ia_Val"/>
</dbReference>
<dbReference type="InterPro" id="IPR013155">
    <property type="entry name" value="M/V/L/I-tRNA-synth_anticd-bd"/>
</dbReference>
<dbReference type="InterPro" id="IPR014729">
    <property type="entry name" value="Rossmann-like_a/b/a_fold"/>
</dbReference>
<dbReference type="InterPro" id="IPR010978">
    <property type="entry name" value="tRNA-bd_arm"/>
</dbReference>
<dbReference type="InterPro" id="IPR009080">
    <property type="entry name" value="tRNAsynth_Ia_anticodon-bd"/>
</dbReference>
<dbReference type="InterPro" id="IPR037118">
    <property type="entry name" value="Val-tRNA_synth_C_sf"/>
</dbReference>
<dbReference type="InterPro" id="IPR019499">
    <property type="entry name" value="Val-tRNA_synth_tRNA-bd"/>
</dbReference>
<dbReference type="InterPro" id="IPR009008">
    <property type="entry name" value="Val/Leu/Ile-tRNA-synth_edit"/>
</dbReference>
<dbReference type="InterPro" id="IPR002303">
    <property type="entry name" value="Valyl-tRNA_ligase"/>
</dbReference>
<dbReference type="NCBIfam" id="NF004349">
    <property type="entry name" value="PRK05729.1"/>
    <property type="match status" value="1"/>
</dbReference>
<dbReference type="NCBIfam" id="TIGR00422">
    <property type="entry name" value="valS"/>
    <property type="match status" value="1"/>
</dbReference>
<dbReference type="PANTHER" id="PTHR11946:SF93">
    <property type="entry name" value="VALINE--TRNA LIGASE, CHLOROPLASTIC_MITOCHONDRIAL 2"/>
    <property type="match status" value="1"/>
</dbReference>
<dbReference type="PANTHER" id="PTHR11946">
    <property type="entry name" value="VALYL-TRNA SYNTHETASES"/>
    <property type="match status" value="1"/>
</dbReference>
<dbReference type="Pfam" id="PF08264">
    <property type="entry name" value="Anticodon_1"/>
    <property type="match status" value="1"/>
</dbReference>
<dbReference type="Pfam" id="PF00133">
    <property type="entry name" value="tRNA-synt_1"/>
    <property type="match status" value="1"/>
</dbReference>
<dbReference type="Pfam" id="PF10458">
    <property type="entry name" value="Val_tRNA-synt_C"/>
    <property type="match status" value="1"/>
</dbReference>
<dbReference type="PRINTS" id="PR00986">
    <property type="entry name" value="TRNASYNTHVAL"/>
</dbReference>
<dbReference type="SUPFAM" id="SSF47323">
    <property type="entry name" value="Anticodon-binding domain of a subclass of class I aminoacyl-tRNA synthetases"/>
    <property type="match status" value="1"/>
</dbReference>
<dbReference type="SUPFAM" id="SSF52374">
    <property type="entry name" value="Nucleotidylyl transferase"/>
    <property type="match status" value="1"/>
</dbReference>
<dbReference type="SUPFAM" id="SSF46589">
    <property type="entry name" value="tRNA-binding arm"/>
    <property type="match status" value="1"/>
</dbReference>
<dbReference type="SUPFAM" id="SSF50677">
    <property type="entry name" value="ValRS/IleRS/LeuRS editing domain"/>
    <property type="match status" value="1"/>
</dbReference>
<dbReference type="PROSITE" id="PS00178">
    <property type="entry name" value="AA_TRNA_LIGASE_I"/>
    <property type="match status" value="1"/>
</dbReference>
<organism>
    <name type="scientific">Campylobacter jejuni subsp. jejuni serotype O:2 (strain ATCC 700819 / NCTC 11168)</name>
    <dbReference type="NCBI Taxonomy" id="192222"/>
    <lineage>
        <taxon>Bacteria</taxon>
        <taxon>Pseudomonadati</taxon>
        <taxon>Campylobacterota</taxon>
        <taxon>Epsilonproteobacteria</taxon>
        <taxon>Campylobacterales</taxon>
        <taxon>Campylobacteraceae</taxon>
        <taxon>Campylobacter</taxon>
    </lineage>
</organism>
<evidence type="ECO:0000255" key="1">
    <source>
        <dbReference type="HAMAP-Rule" id="MF_02004"/>
    </source>
</evidence>
<comment type="function">
    <text evidence="1">Catalyzes the attachment of valine to tRNA(Val). As ValRS can inadvertently accommodate and process structurally similar amino acids such as threonine, to avoid such errors, it has a 'posttransfer' editing activity that hydrolyzes mischarged Thr-tRNA(Val) in a tRNA-dependent manner.</text>
</comment>
<comment type="catalytic activity">
    <reaction evidence="1">
        <text>tRNA(Val) + L-valine + ATP = L-valyl-tRNA(Val) + AMP + diphosphate</text>
        <dbReference type="Rhea" id="RHEA:10704"/>
        <dbReference type="Rhea" id="RHEA-COMP:9672"/>
        <dbReference type="Rhea" id="RHEA-COMP:9708"/>
        <dbReference type="ChEBI" id="CHEBI:30616"/>
        <dbReference type="ChEBI" id="CHEBI:33019"/>
        <dbReference type="ChEBI" id="CHEBI:57762"/>
        <dbReference type="ChEBI" id="CHEBI:78442"/>
        <dbReference type="ChEBI" id="CHEBI:78537"/>
        <dbReference type="ChEBI" id="CHEBI:456215"/>
        <dbReference type="EC" id="6.1.1.9"/>
    </reaction>
</comment>
<comment type="subunit">
    <text evidence="1">Monomer.</text>
</comment>
<comment type="subcellular location">
    <subcellularLocation>
        <location evidence="1">Cytoplasm</location>
    </subcellularLocation>
</comment>
<comment type="domain">
    <text evidence="1">ValRS has two distinct active sites: one for aminoacylation and one for editing. The misactivated threonine is translocated from the active site to the editing site.</text>
</comment>
<comment type="domain">
    <text evidence="1">The C-terminal coiled-coil domain is crucial for aminoacylation activity.</text>
</comment>
<comment type="similarity">
    <text evidence="1">Belongs to the class-I aminoacyl-tRNA synthetase family. ValS type 1 subfamily.</text>
</comment>
<gene>
    <name evidence="1" type="primary">valS</name>
    <name type="ordered locus">Cj0775c</name>
</gene>
<keyword id="KW-0030">Aminoacyl-tRNA synthetase</keyword>
<keyword id="KW-0067">ATP-binding</keyword>
<keyword id="KW-0175">Coiled coil</keyword>
<keyword id="KW-0963">Cytoplasm</keyword>
<keyword id="KW-0436">Ligase</keyword>
<keyword id="KW-0547">Nucleotide-binding</keyword>
<keyword id="KW-0648">Protein biosynthesis</keyword>
<keyword id="KW-1185">Reference proteome</keyword>